<reference key="1">
    <citation type="journal article" date="2008" name="PLoS ONE">
        <title>Genome biology of Actinobacillus pleuropneumoniae JL03, an isolate of serotype 3 prevalent in China.</title>
        <authorList>
            <person name="Xu Z."/>
            <person name="Zhou Y."/>
            <person name="Li L."/>
            <person name="Zhou R."/>
            <person name="Xiao S."/>
            <person name="Wan Y."/>
            <person name="Zhang S."/>
            <person name="Wang K."/>
            <person name="Li W."/>
            <person name="Li L."/>
            <person name="Jin H."/>
            <person name="Kang M."/>
            <person name="Dalai B."/>
            <person name="Li T."/>
            <person name="Liu L."/>
            <person name="Cheng Y."/>
            <person name="Zhang L."/>
            <person name="Xu T."/>
            <person name="Zheng H."/>
            <person name="Pu S."/>
            <person name="Wang B."/>
            <person name="Gu W."/>
            <person name="Zhang X.L."/>
            <person name="Zhu G.-F."/>
            <person name="Wang S."/>
            <person name="Zhao G.-P."/>
            <person name="Chen H."/>
        </authorList>
    </citation>
    <scope>NUCLEOTIDE SEQUENCE [LARGE SCALE GENOMIC DNA]</scope>
    <source>
        <strain>JL03</strain>
    </source>
</reference>
<name>TTCA_ACTPJ</name>
<evidence type="ECO:0000255" key="1">
    <source>
        <dbReference type="HAMAP-Rule" id="MF_01850"/>
    </source>
</evidence>
<protein>
    <recommendedName>
        <fullName evidence="1">tRNA-cytidine(32) 2-sulfurtransferase</fullName>
        <ecNumber evidence="1">2.8.1.-</ecNumber>
    </recommendedName>
    <alternativeName>
        <fullName evidence="1">Two-thiocytidine biosynthesis protein A</fullName>
    </alternativeName>
    <alternativeName>
        <fullName evidence="1">tRNA 2-thiocytidine biosynthesis protein TtcA</fullName>
    </alternativeName>
</protein>
<feature type="chain" id="PRO_0000348651" description="tRNA-cytidine(32) 2-sulfurtransferase">
    <location>
        <begin position="1"/>
        <end position="318"/>
    </location>
</feature>
<feature type="short sequence motif" description="PP-loop motif" evidence="1">
    <location>
        <begin position="52"/>
        <end position="57"/>
    </location>
</feature>
<feature type="binding site" evidence="1">
    <location>
        <position position="127"/>
    </location>
    <ligand>
        <name>[4Fe-4S] cluster</name>
        <dbReference type="ChEBI" id="CHEBI:49883"/>
    </ligand>
</feature>
<feature type="binding site" evidence="1">
    <location>
        <position position="130"/>
    </location>
    <ligand>
        <name>[4Fe-4S] cluster</name>
        <dbReference type="ChEBI" id="CHEBI:49883"/>
    </ligand>
</feature>
<feature type="binding site" evidence="1">
    <location>
        <position position="218"/>
    </location>
    <ligand>
        <name>[4Fe-4S] cluster</name>
        <dbReference type="ChEBI" id="CHEBI:49883"/>
    </ligand>
</feature>
<proteinExistence type="inferred from homology"/>
<comment type="function">
    <text evidence="1">Catalyzes the ATP-dependent 2-thiolation of cytidine in position 32 of tRNA, to form 2-thiocytidine (s(2)C32). The sulfur atoms are provided by the cysteine/cysteine desulfurase (IscS) system.</text>
</comment>
<comment type="catalytic activity">
    <reaction evidence="1">
        <text>cytidine(32) in tRNA + S-sulfanyl-L-cysteinyl-[cysteine desulfurase] + AH2 + ATP = 2-thiocytidine(32) in tRNA + L-cysteinyl-[cysteine desulfurase] + A + AMP + diphosphate + H(+)</text>
        <dbReference type="Rhea" id="RHEA:57048"/>
        <dbReference type="Rhea" id="RHEA-COMP:10288"/>
        <dbReference type="Rhea" id="RHEA-COMP:12157"/>
        <dbReference type="Rhea" id="RHEA-COMP:12158"/>
        <dbReference type="Rhea" id="RHEA-COMP:14821"/>
        <dbReference type="ChEBI" id="CHEBI:13193"/>
        <dbReference type="ChEBI" id="CHEBI:15378"/>
        <dbReference type="ChEBI" id="CHEBI:17499"/>
        <dbReference type="ChEBI" id="CHEBI:29950"/>
        <dbReference type="ChEBI" id="CHEBI:30616"/>
        <dbReference type="ChEBI" id="CHEBI:33019"/>
        <dbReference type="ChEBI" id="CHEBI:61963"/>
        <dbReference type="ChEBI" id="CHEBI:82748"/>
        <dbReference type="ChEBI" id="CHEBI:141453"/>
        <dbReference type="ChEBI" id="CHEBI:456215"/>
    </reaction>
    <physiologicalReaction direction="left-to-right" evidence="1">
        <dbReference type="Rhea" id="RHEA:57049"/>
    </physiologicalReaction>
</comment>
<comment type="cofactor">
    <cofactor evidence="1">
        <name>Mg(2+)</name>
        <dbReference type="ChEBI" id="CHEBI:18420"/>
    </cofactor>
</comment>
<comment type="cofactor">
    <cofactor evidence="1">
        <name>[4Fe-4S] cluster</name>
        <dbReference type="ChEBI" id="CHEBI:49883"/>
    </cofactor>
    <text evidence="1">Binds 1 [4Fe-4S] cluster per subunit. The cluster is chelated by three Cys residues, the fourth Fe has a free coordination site that may bind a sulfur atom transferred from the persulfide of IscS.</text>
</comment>
<comment type="pathway">
    <text evidence="1">tRNA modification.</text>
</comment>
<comment type="subunit">
    <text evidence="1">Homodimer.</text>
</comment>
<comment type="subcellular location">
    <subcellularLocation>
        <location evidence="1">Cytoplasm</location>
    </subcellularLocation>
</comment>
<comment type="miscellaneous">
    <text evidence="1">The thiolation reaction likely consists of two steps: a first activation step by ATP to form an adenylated intermediate of the target base of tRNA, and a second nucleophilic substitution step of the sulfur (S) atom supplied by the hydrosulfide attached to the Fe-S cluster.</text>
</comment>
<comment type="similarity">
    <text evidence="1">Belongs to the TtcA family.</text>
</comment>
<organism>
    <name type="scientific">Actinobacillus pleuropneumoniae serotype 3 (strain JL03)</name>
    <dbReference type="NCBI Taxonomy" id="434271"/>
    <lineage>
        <taxon>Bacteria</taxon>
        <taxon>Pseudomonadati</taxon>
        <taxon>Pseudomonadota</taxon>
        <taxon>Gammaproteobacteria</taxon>
        <taxon>Pasteurellales</taxon>
        <taxon>Pasteurellaceae</taxon>
        <taxon>Actinobacillus</taxon>
    </lineage>
</organism>
<gene>
    <name evidence="1" type="primary">ttcA</name>
    <name type="ordered locus">APJL_0995</name>
</gene>
<accession>B0BPR8</accession>
<keyword id="KW-0004">4Fe-4S</keyword>
<keyword id="KW-0067">ATP-binding</keyword>
<keyword id="KW-0963">Cytoplasm</keyword>
<keyword id="KW-0408">Iron</keyword>
<keyword id="KW-0411">Iron-sulfur</keyword>
<keyword id="KW-0460">Magnesium</keyword>
<keyword id="KW-0479">Metal-binding</keyword>
<keyword id="KW-0547">Nucleotide-binding</keyword>
<keyword id="KW-0694">RNA-binding</keyword>
<keyword id="KW-0808">Transferase</keyword>
<keyword id="KW-0819">tRNA processing</keyword>
<keyword id="KW-0820">tRNA-binding</keyword>
<dbReference type="EC" id="2.8.1.-" evidence="1"/>
<dbReference type="EMBL" id="CP000687">
    <property type="protein sequence ID" value="ABY69553.1"/>
    <property type="molecule type" value="Genomic_DNA"/>
</dbReference>
<dbReference type="RefSeq" id="WP_005597684.1">
    <property type="nucleotide sequence ID" value="NC_010278.1"/>
</dbReference>
<dbReference type="SMR" id="B0BPR8"/>
<dbReference type="GeneID" id="48599205"/>
<dbReference type="KEGG" id="apj:APJL_0995"/>
<dbReference type="HOGENOM" id="CLU_026481_0_0_6"/>
<dbReference type="Proteomes" id="UP000008547">
    <property type="component" value="Chromosome"/>
</dbReference>
<dbReference type="GO" id="GO:0005737">
    <property type="term" value="C:cytoplasm"/>
    <property type="evidence" value="ECO:0007669"/>
    <property type="project" value="UniProtKB-SubCell"/>
</dbReference>
<dbReference type="GO" id="GO:0051539">
    <property type="term" value="F:4 iron, 4 sulfur cluster binding"/>
    <property type="evidence" value="ECO:0007669"/>
    <property type="project" value="UniProtKB-UniRule"/>
</dbReference>
<dbReference type="GO" id="GO:0005524">
    <property type="term" value="F:ATP binding"/>
    <property type="evidence" value="ECO:0007669"/>
    <property type="project" value="UniProtKB-UniRule"/>
</dbReference>
<dbReference type="GO" id="GO:0000287">
    <property type="term" value="F:magnesium ion binding"/>
    <property type="evidence" value="ECO:0007669"/>
    <property type="project" value="UniProtKB-UniRule"/>
</dbReference>
<dbReference type="GO" id="GO:0016783">
    <property type="term" value="F:sulfurtransferase activity"/>
    <property type="evidence" value="ECO:0007669"/>
    <property type="project" value="UniProtKB-UniRule"/>
</dbReference>
<dbReference type="GO" id="GO:0000049">
    <property type="term" value="F:tRNA binding"/>
    <property type="evidence" value="ECO:0007669"/>
    <property type="project" value="UniProtKB-KW"/>
</dbReference>
<dbReference type="GO" id="GO:0034227">
    <property type="term" value="P:tRNA thio-modification"/>
    <property type="evidence" value="ECO:0007669"/>
    <property type="project" value="UniProtKB-UniRule"/>
</dbReference>
<dbReference type="CDD" id="cd24138">
    <property type="entry name" value="TtcA-like"/>
    <property type="match status" value="1"/>
</dbReference>
<dbReference type="Gene3D" id="3.40.50.620">
    <property type="entry name" value="HUPs"/>
    <property type="match status" value="1"/>
</dbReference>
<dbReference type="HAMAP" id="MF_01850">
    <property type="entry name" value="TtcA"/>
    <property type="match status" value="1"/>
</dbReference>
<dbReference type="InterPro" id="IPR014729">
    <property type="entry name" value="Rossmann-like_a/b/a_fold"/>
</dbReference>
<dbReference type="InterPro" id="IPR011063">
    <property type="entry name" value="TilS/TtcA_N"/>
</dbReference>
<dbReference type="InterPro" id="IPR012089">
    <property type="entry name" value="tRNA_Cyd_32_2_STrfase"/>
</dbReference>
<dbReference type="InterPro" id="IPR035107">
    <property type="entry name" value="tRNA_thiolation_TtcA_Ctu1"/>
</dbReference>
<dbReference type="NCBIfam" id="NF007972">
    <property type="entry name" value="PRK10696.1"/>
    <property type="match status" value="1"/>
</dbReference>
<dbReference type="PANTHER" id="PTHR43686:SF1">
    <property type="entry name" value="AMINOTRAN_5 DOMAIN-CONTAINING PROTEIN"/>
    <property type="match status" value="1"/>
</dbReference>
<dbReference type="PANTHER" id="PTHR43686">
    <property type="entry name" value="SULFURTRANSFERASE-RELATED"/>
    <property type="match status" value="1"/>
</dbReference>
<dbReference type="Pfam" id="PF01171">
    <property type="entry name" value="ATP_bind_3"/>
    <property type="match status" value="1"/>
</dbReference>
<dbReference type="PIRSF" id="PIRSF004976">
    <property type="entry name" value="ATPase_YdaO"/>
    <property type="match status" value="1"/>
</dbReference>
<dbReference type="SUPFAM" id="SSF52402">
    <property type="entry name" value="Adenine nucleotide alpha hydrolases-like"/>
    <property type="match status" value="1"/>
</dbReference>
<sequence length="318" mass="36101">MNQDTQSANTQQEKKIAYNFNKLQKRLRRNVGNAIADFNMIEDGDKVMVCLSGGKDSYTLLDILLNLKLSAPIHFDIVAVNLDQKQPGFPEHILPEYLESIGVEYKIVEENTYGIVKEKIPEGKTTCSLCSRLRRGILYRTATELGATKIALGHHRDDMLETLFLNMFYGGKLKSMPPKLISDDGKQIVIRPLAYCKEKDIEKYSQAKQFPIIPCNLCGSQPNLQRQVVKEMLQTWDRQYPGRIETMFSAMQNITLSHLCDPSLFDFKGLKLGQVLDGVEGDIAFDKAEIPNQPLIQDEDEQTTDYGENGMIQFKQVQ</sequence>